<dbReference type="EMBL" id="AK027207">
    <property type="protein sequence ID" value="BAB15691.1"/>
    <property type="status" value="ALT_INIT"/>
    <property type="molecule type" value="mRNA"/>
</dbReference>
<dbReference type="EMBL" id="AK291625">
    <property type="protein sequence ID" value="BAF84314.1"/>
    <property type="molecule type" value="mRNA"/>
</dbReference>
<dbReference type="EMBL" id="CH471065">
    <property type="protein sequence ID" value="EAW67533.1"/>
    <property type="molecule type" value="Genomic_DNA"/>
</dbReference>
<dbReference type="EMBL" id="BC009820">
    <property type="protein sequence ID" value="AAH09820.2"/>
    <property type="status" value="ALT_INIT"/>
    <property type="molecule type" value="mRNA"/>
</dbReference>
<dbReference type="EMBL" id="BC068507">
    <property type="protein sequence ID" value="AAH68507.1"/>
    <property type="molecule type" value="mRNA"/>
</dbReference>
<dbReference type="CCDS" id="CCDS8438.1">
    <molecule id="Q6NUN7-1"/>
</dbReference>
<dbReference type="CCDS" id="CCDS8439.1">
    <molecule id="Q6NUN7-2"/>
</dbReference>
<dbReference type="RefSeq" id="NP_001350018.1">
    <molecule id="Q6NUN7-1"/>
    <property type="nucleotide sequence ID" value="NM_001363089.2"/>
</dbReference>
<dbReference type="RefSeq" id="NP_079082.2">
    <molecule id="Q6NUN7-1"/>
    <property type="nucleotide sequence ID" value="NM_024806.3"/>
</dbReference>
<dbReference type="RefSeq" id="NP_954575.1">
    <molecule id="Q6NUN7-2"/>
    <property type="nucleotide sequence ID" value="NM_199124.3"/>
</dbReference>
<dbReference type="RefSeq" id="XP_005271737.1">
    <property type="nucleotide sequence ID" value="XM_005271680.4"/>
</dbReference>
<dbReference type="RefSeq" id="XP_011541311.1">
    <property type="nucleotide sequence ID" value="XM_011543009.2"/>
</dbReference>
<dbReference type="BioGRID" id="122952">
    <property type="interactions" value="8"/>
</dbReference>
<dbReference type="FunCoup" id="Q6NUN7">
    <property type="interactions" value="5"/>
</dbReference>
<dbReference type="IntAct" id="Q6NUN7">
    <property type="interactions" value="4"/>
</dbReference>
<dbReference type="STRING" id="9606.ENSP00000227349"/>
<dbReference type="GlyGen" id="Q6NUN7">
    <property type="glycosylation" value="1 site, 1 O-linked glycan (1 site)"/>
</dbReference>
<dbReference type="iPTMnet" id="Q6NUN7"/>
<dbReference type="PhosphoSitePlus" id="Q6NUN7"/>
<dbReference type="BioMuta" id="C11orf63"/>
<dbReference type="DMDM" id="74736827"/>
<dbReference type="jPOST" id="Q6NUN7"/>
<dbReference type="MassIVE" id="Q6NUN7"/>
<dbReference type="PaxDb" id="9606-ENSP00000227349"/>
<dbReference type="PeptideAtlas" id="Q6NUN7"/>
<dbReference type="ProteomicsDB" id="66694">
    <molecule id="Q6NUN7-1"/>
</dbReference>
<dbReference type="ProteomicsDB" id="66695">
    <molecule id="Q6NUN7-2"/>
</dbReference>
<dbReference type="Antibodypedia" id="49546">
    <property type="antibodies" value="17 antibodies from 6 providers"/>
</dbReference>
<dbReference type="DNASU" id="79864"/>
<dbReference type="Ensembl" id="ENST00000227349.7">
    <molecule id="Q6NUN7-1"/>
    <property type="protein sequence ID" value="ENSP00000227349.2"/>
    <property type="gene ID" value="ENSG00000109944.11"/>
</dbReference>
<dbReference type="Ensembl" id="ENST00000307257.10">
    <molecule id="Q6NUN7-2"/>
    <property type="protein sequence ID" value="ENSP00000307695.5"/>
    <property type="gene ID" value="ENSG00000109944.11"/>
</dbReference>
<dbReference type="Ensembl" id="ENST00000531316.1">
    <molecule id="Q6NUN7-1"/>
    <property type="protein sequence ID" value="ENSP00000431669.1"/>
    <property type="gene ID" value="ENSG00000109944.11"/>
</dbReference>
<dbReference type="GeneID" id="79864"/>
<dbReference type="KEGG" id="hsa:79864"/>
<dbReference type="MANE-Select" id="ENST00000227349.7">
    <property type="protein sequence ID" value="ENSP00000227349.2"/>
    <property type="RefSeq nucleotide sequence ID" value="NM_024806.4"/>
    <property type="RefSeq protein sequence ID" value="NP_079082.2"/>
</dbReference>
<dbReference type="UCSC" id="uc001pyl.3">
    <molecule id="Q6NUN7-1"/>
    <property type="organism name" value="human"/>
</dbReference>
<dbReference type="AGR" id="HGNC:26288"/>
<dbReference type="CTD" id="79864"/>
<dbReference type="DisGeNET" id="79864"/>
<dbReference type="GeneCards" id="JHY"/>
<dbReference type="HGNC" id="HGNC:26288">
    <property type="gene designation" value="JHY"/>
</dbReference>
<dbReference type="HPA" id="ENSG00000109944">
    <property type="expression patterns" value="Tissue enhanced (choroid plexus, testis)"/>
</dbReference>
<dbReference type="MIM" id="617594">
    <property type="type" value="gene"/>
</dbReference>
<dbReference type="neXtProt" id="NX_Q6NUN7"/>
<dbReference type="OpenTargets" id="ENSG00000109944"/>
<dbReference type="PharmGKB" id="PA143485358"/>
<dbReference type="VEuPathDB" id="HostDB:ENSG00000109944"/>
<dbReference type="eggNOG" id="ENOG502S6KC">
    <property type="taxonomic scope" value="Eukaryota"/>
</dbReference>
<dbReference type="GeneTree" id="ENSGT00390000002823"/>
<dbReference type="HOGENOM" id="CLU_407472_0_0_1"/>
<dbReference type="InParanoid" id="Q6NUN7"/>
<dbReference type="OMA" id="WKFHPSS"/>
<dbReference type="OrthoDB" id="10057281at2759"/>
<dbReference type="PAN-GO" id="Q6NUN7">
    <property type="GO annotations" value="2 GO annotations based on evolutionary models"/>
</dbReference>
<dbReference type="PhylomeDB" id="Q6NUN7"/>
<dbReference type="TreeFam" id="TF335473"/>
<dbReference type="PathwayCommons" id="Q6NUN7"/>
<dbReference type="SignaLink" id="Q6NUN7"/>
<dbReference type="BioGRID-ORCS" id="79864">
    <property type="hits" value="39 hits in 1114 CRISPR screens"/>
</dbReference>
<dbReference type="ChiTaRS" id="JHY">
    <property type="organism name" value="human"/>
</dbReference>
<dbReference type="GenomeRNAi" id="79864"/>
<dbReference type="Pharos" id="Q6NUN7">
    <property type="development level" value="Tdark"/>
</dbReference>
<dbReference type="PRO" id="PR:Q6NUN7"/>
<dbReference type="Proteomes" id="UP000005640">
    <property type="component" value="Chromosome 11"/>
</dbReference>
<dbReference type="RNAct" id="Q6NUN7">
    <property type="molecule type" value="protein"/>
</dbReference>
<dbReference type="Bgee" id="ENSG00000109944">
    <property type="expression patterns" value="Expressed in bronchial epithelial cell and 155 other cell types or tissues"/>
</dbReference>
<dbReference type="GO" id="GO:0005576">
    <property type="term" value="C:extracellular region"/>
    <property type="evidence" value="ECO:0007669"/>
    <property type="project" value="GOC"/>
</dbReference>
<dbReference type="GO" id="GO:0035082">
    <property type="term" value="P:axoneme assembly"/>
    <property type="evidence" value="ECO:0000318"/>
    <property type="project" value="GO_Central"/>
</dbReference>
<dbReference type="GO" id="GO:0007420">
    <property type="term" value="P:brain development"/>
    <property type="evidence" value="ECO:0000318"/>
    <property type="project" value="GO_Central"/>
</dbReference>
<dbReference type="GO" id="GO:0030154">
    <property type="term" value="P:cell differentiation"/>
    <property type="evidence" value="ECO:0007669"/>
    <property type="project" value="Ensembl"/>
</dbReference>
<dbReference type="GO" id="GO:0090660">
    <property type="term" value="P:cerebrospinal fluid circulation"/>
    <property type="evidence" value="ECO:0007669"/>
    <property type="project" value="Ensembl"/>
</dbReference>
<dbReference type="GO" id="GO:0051649">
    <property type="term" value="P:establishment of localization in cell"/>
    <property type="evidence" value="ECO:0007669"/>
    <property type="project" value="Ensembl"/>
</dbReference>
<dbReference type="GO" id="GO:0044458">
    <property type="term" value="P:motile cilium assembly"/>
    <property type="evidence" value="ECO:0007669"/>
    <property type="project" value="Ensembl"/>
</dbReference>
<dbReference type="GO" id="GO:0090175">
    <property type="term" value="P:regulation of establishment of planar polarity"/>
    <property type="evidence" value="ECO:0007669"/>
    <property type="project" value="Ensembl"/>
</dbReference>
<dbReference type="InterPro" id="IPR027968">
    <property type="entry name" value="JHY"/>
</dbReference>
<dbReference type="PANTHER" id="PTHR14726">
    <property type="entry name" value="JHY PROTEIN HOMOLOG"/>
    <property type="match status" value="1"/>
</dbReference>
<dbReference type="PANTHER" id="PTHR14726:SF1">
    <property type="entry name" value="JHY PROTEIN HOMOLOG"/>
    <property type="match status" value="1"/>
</dbReference>
<dbReference type="Pfam" id="PF15261">
    <property type="entry name" value="JHY"/>
    <property type="match status" value="1"/>
</dbReference>
<proteinExistence type="evidence at protein level"/>
<evidence type="ECO:0000250" key="1">
    <source>
        <dbReference type="UniProtKB" id="E9Q793"/>
    </source>
</evidence>
<evidence type="ECO:0000256" key="2">
    <source>
        <dbReference type="SAM" id="MobiDB-lite"/>
    </source>
</evidence>
<evidence type="ECO:0000303" key="3">
    <source>
    </source>
</evidence>
<evidence type="ECO:0000305" key="4"/>
<evidence type="ECO:0000312" key="5">
    <source>
        <dbReference type="HGNC" id="HGNC:26288"/>
    </source>
</evidence>
<name>JHY_HUMAN</name>
<sequence>MSKRKLIPKLSIQSPVLHTNLNVQSTHPPLKKEDLHRISKDSLESDSESLTQEIMCHSEFDDRIRGNGMEPDSLDEEESPRWGSLHEMEEEASGKAAQMAREQNHHTWDQGANNRQQPIEDKYSDLRYDPNWKSKKEEGQLLSVEALPESTDSSLENLPLAPLYPSQETSMELSGGKGEQKESPQSAASLLGSEFLSPNYEHGARRSKPFSELSDSDLEEKSSSLSPYVKSSSSHNEVFLPGSRGPRRRKSKQHFVEKNKLTLGLPTPKTDSYLQLHNKKRGESHPEQISYPVRVTDKTSIQNAKEMENAAIDPEDKWHQRAQQLKNYQEHWSQYESTKSSNVPRGQPSDMVNDHQPSRRPAKLKIRKQCKHQNGLKSSTTEEVTASQGNQNNPPRQQQNQNKPLDTSTKPESIVIMHASNNDVQASRALRSHNLKETSNTFAPPKQAFDKVLSKNSTGCDSGLNVNKERGHKDQEEKRFSYQQLHTLSDMDLNNLNELSKRHVLLSQKGSQFVYHINTHGSTKNKKQLKQPYTETKYRNLEMLWKFHSSSDSQTVRASPDSWLTQIMEQHQQALVQLTDVQPSEGALSSVTLPPILSRVESESQLSSERSQRNQVKISRSNSEGYLFQLEKGKKHKKRSSSKNTKLKGYQKRDVKLGGLGPDFESIRDKTQKLIQQKEYAKQVKEYNMKTLSILSKPQTEKTQKKSAIPRQKALEYAKTIPKPKPSNLTHQASKEQKNPTYAGKEESLPEISLLEILQNRHEREKQAVAAFKVLHIV</sequence>
<keyword id="KW-0025">Alternative splicing</keyword>
<keyword id="KW-0970">Cilium biogenesis/degradation</keyword>
<keyword id="KW-1267">Proteomics identification</keyword>
<keyword id="KW-1185">Reference proteome</keyword>
<comment type="function">
    <text evidence="1">Required for the normal development of cilia in brain ependymal cells lining the ventricular surfaces.</text>
</comment>
<comment type="alternative products">
    <event type="alternative splicing"/>
    <isoform>
        <id>Q6NUN7-1</id>
        <name>1</name>
        <sequence type="displayed"/>
    </isoform>
    <isoform>
        <id>Q6NUN7-2</id>
        <name>2</name>
        <sequence type="described" ref="VSP_023915 VSP_023916"/>
    </isoform>
</comment>
<comment type="sequence caution" evidence="4">
    <conflict type="erroneous initiation">
        <sequence resource="EMBL-CDS" id="AAH09820"/>
    </conflict>
    <text>Extended N-terminus.</text>
</comment>
<comment type="sequence caution" evidence="4">
    <conflict type="erroneous initiation">
        <sequence resource="EMBL-CDS" id="BAB15691"/>
    </conflict>
    <text>Truncated N-terminus.</text>
</comment>
<accession>Q6NUN7</accession>
<accession>A8K6G0</accession>
<accession>Q96GB5</accession>
<accession>Q9H5D6</accession>
<reference key="1">
    <citation type="journal article" date="2004" name="Nat. Genet.">
        <title>Complete sequencing and characterization of 21,243 full-length human cDNAs.</title>
        <authorList>
            <person name="Ota T."/>
            <person name="Suzuki Y."/>
            <person name="Nishikawa T."/>
            <person name="Otsuki T."/>
            <person name="Sugiyama T."/>
            <person name="Irie R."/>
            <person name="Wakamatsu A."/>
            <person name="Hayashi K."/>
            <person name="Sato H."/>
            <person name="Nagai K."/>
            <person name="Kimura K."/>
            <person name="Makita H."/>
            <person name="Sekine M."/>
            <person name="Obayashi M."/>
            <person name="Nishi T."/>
            <person name="Shibahara T."/>
            <person name="Tanaka T."/>
            <person name="Ishii S."/>
            <person name="Yamamoto J."/>
            <person name="Saito K."/>
            <person name="Kawai Y."/>
            <person name="Isono Y."/>
            <person name="Nakamura Y."/>
            <person name="Nagahari K."/>
            <person name="Murakami K."/>
            <person name="Yasuda T."/>
            <person name="Iwayanagi T."/>
            <person name="Wagatsuma M."/>
            <person name="Shiratori A."/>
            <person name="Sudo H."/>
            <person name="Hosoiri T."/>
            <person name="Kaku Y."/>
            <person name="Kodaira H."/>
            <person name="Kondo H."/>
            <person name="Sugawara M."/>
            <person name="Takahashi M."/>
            <person name="Kanda K."/>
            <person name="Yokoi T."/>
            <person name="Furuya T."/>
            <person name="Kikkawa E."/>
            <person name="Omura Y."/>
            <person name="Abe K."/>
            <person name="Kamihara K."/>
            <person name="Katsuta N."/>
            <person name="Sato K."/>
            <person name="Tanikawa M."/>
            <person name="Yamazaki M."/>
            <person name="Ninomiya K."/>
            <person name="Ishibashi T."/>
            <person name="Yamashita H."/>
            <person name="Murakawa K."/>
            <person name="Fujimori K."/>
            <person name="Tanai H."/>
            <person name="Kimata M."/>
            <person name="Watanabe M."/>
            <person name="Hiraoka S."/>
            <person name="Chiba Y."/>
            <person name="Ishida S."/>
            <person name="Ono Y."/>
            <person name="Takiguchi S."/>
            <person name="Watanabe S."/>
            <person name="Yosida M."/>
            <person name="Hotuta T."/>
            <person name="Kusano J."/>
            <person name="Kanehori K."/>
            <person name="Takahashi-Fujii A."/>
            <person name="Hara H."/>
            <person name="Tanase T.-O."/>
            <person name="Nomura Y."/>
            <person name="Togiya S."/>
            <person name="Komai F."/>
            <person name="Hara R."/>
            <person name="Takeuchi K."/>
            <person name="Arita M."/>
            <person name="Imose N."/>
            <person name="Musashino K."/>
            <person name="Yuuki H."/>
            <person name="Oshima A."/>
            <person name="Sasaki N."/>
            <person name="Aotsuka S."/>
            <person name="Yoshikawa Y."/>
            <person name="Matsunawa H."/>
            <person name="Ichihara T."/>
            <person name="Shiohata N."/>
            <person name="Sano S."/>
            <person name="Moriya S."/>
            <person name="Momiyama H."/>
            <person name="Satoh N."/>
            <person name="Takami S."/>
            <person name="Terashima Y."/>
            <person name="Suzuki O."/>
            <person name="Nakagawa S."/>
            <person name="Senoh A."/>
            <person name="Mizoguchi H."/>
            <person name="Goto Y."/>
            <person name="Shimizu F."/>
            <person name="Wakebe H."/>
            <person name="Hishigaki H."/>
            <person name="Watanabe T."/>
            <person name="Sugiyama A."/>
            <person name="Takemoto M."/>
            <person name="Kawakami B."/>
            <person name="Yamazaki M."/>
            <person name="Watanabe K."/>
            <person name="Kumagai A."/>
            <person name="Itakura S."/>
            <person name="Fukuzumi Y."/>
            <person name="Fujimori Y."/>
            <person name="Komiyama M."/>
            <person name="Tashiro H."/>
            <person name="Tanigami A."/>
            <person name="Fujiwara T."/>
            <person name="Ono T."/>
            <person name="Yamada K."/>
            <person name="Fujii Y."/>
            <person name="Ozaki K."/>
            <person name="Hirao M."/>
            <person name="Ohmori Y."/>
            <person name="Kawabata A."/>
            <person name="Hikiji T."/>
            <person name="Kobatake N."/>
            <person name="Inagaki H."/>
            <person name="Ikema Y."/>
            <person name="Okamoto S."/>
            <person name="Okitani R."/>
            <person name="Kawakami T."/>
            <person name="Noguchi S."/>
            <person name="Itoh T."/>
            <person name="Shigeta K."/>
            <person name="Senba T."/>
            <person name="Matsumura K."/>
            <person name="Nakajima Y."/>
            <person name="Mizuno T."/>
            <person name="Morinaga M."/>
            <person name="Sasaki M."/>
            <person name="Togashi T."/>
            <person name="Oyama M."/>
            <person name="Hata H."/>
            <person name="Watanabe M."/>
            <person name="Komatsu T."/>
            <person name="Mizushima-Sugano J."/>
            <person name="Satoh T."/>
            <person name="Shirai Y."/>
            <person name="Takahashi Y."/>
            <person name="Nakagawa K."/>
            <person name="Okumura K."/>
            <person name="Nagase T."/>
            <person name="Nomura N."/>
            <person name="Kikuchi H."/>
            <person name="Masuho Y."/>
            <person name="Yamashita R."/>
            <person name="Nakai K."/>
            <person name="Yada T."/>
            <person name="Nakamura Y."/>
            <person name="Ohara O."/>
            <person name="Isogai T."/>
            <person name="Sugano S."/>
        </authorList>
    </citation>
    <scope>NUCLEOTIDE SEQUENCE [LARGE SCALE MRNA] (ISOFORM 1)</scope>
    <source>
        <tissue>Lung</tissue>
        <tissue>Placenta</tissue>
    </source>
</reference>
<reference key="2">
    <citation type="submission" date="2005-07" db="EMBL/GenBank/DDBJ databases">
        <authorList>
            <person name="Mural R.J."/>
            <person name="Istrail S."/>
            <person name="Sutton G.G."/>
            <person name="Florea L."/>
            <person name="Halpern A.L."/>
            <person name="Mobarry C.M."/>
            <person name="Lippert R."/>
            <person name="Walenz B."/>
            <person name="Shatkay H."/>
            <person name="Dew I."/>
            <person name="Miller J.R."/>
            <person name="Flanigan M.J."/>
            <person name="Edwards N.J."/>
            <person name="Bolanos R."/>
            <person name="Fasulo D."/>
            <person name="Halldorsson B.V."/>
            <person name="Hannenhalli S."/>
            <person name="Turner R."/>
            <person name="Yooseph S."/>
            <person name="Lu F."/>
            <person name="Nusskern D.R."/>
            <person name="Shue B.C."/>
            <person name="Zheng X.H."/>
            <person name="Zhong F."/>
            <person name="Delcher A.L."/>
            <person name="Huson D.H."/>
            <person name="Kravitz S.A."/>
            <person name="Mouchard L."/>
            <person name="Reinert K."/>
            <person name="Remington K.A."/>
            <person name="Clark A.G."/>
            <person name="Waterman M.S."/>
            <person name="Eichler E.E."/>
            <person name="Adams M.D."/>
            <person name="Hunkapiller M.W."/>
            <person name="Myers E.W."/>
            <person name="Venter J.C."/>
        </authorList>
    </citation>
    <scope>NUCLEOTIDE SEQUENCE [LARGE SCALE GENOMIC DNA]</scope>
</reference>
<reference key="3">
    <citation type="journal article" date="2004" name="Genome Res.">
        <title>The status, quality, and expansion of the NIH full-length cDNA project: the Mammalian Gene Collection (MGC).</title>
        <authorList>
            <consortium name="The MGC Project Team"/>
        </authorList>
    </citation>
    <scope>NUCLEOTIDE SEQUENCE [LARGE SCALE MRNA] (ISOFORM 1)</scope>
    <scope>NUCLEOTIDE SEQUENCE [LARGE SCALE MRNA] OF 34-778 (ISOFORM 2)</scope>
    <source>
        <tissue>Lung</tissue>
        <tissue>Testis</tissue>
    </source>
</reference>
<protein>
    <recommendedName>
        <fullName>Jhy protein homolog</fullName>
    </recommendedName>
</protein>
<organism>
    <name type="scientific">Homo sapiens</name>
    <name type="common">Human</name>
    <dbReference type="NCBI Taxonomy" id="9606"/>
    <lineage>
        <taxon>Eukaryota</taxon>
        <taxon>Metazoa</taxon>
        <taxon>Chordata</taxon>
        <taxon>Craniata</taxon>
        <taxon>Vertebrata</taxon>
        <taxon>Euteleostomi</taxon>
        <taxon>Mammalia</taxon>
        <taxon>Eutheria</taxon>
        <taxon>Euarchontoglires</taxon>
        <taxon>Primates</taxon>
        <taxon>Haplorrhini</taxon>
        <taxon>Catarrhini</taxon>
        <taxon>Hominidae</taxon>
        <taxon>Homo</taxon>
    </lineage>
</organism>
<gene>
    <name evidence="5" type="primary">JHY</name>
    <name type="synonym">C11orf63</name>
</gene>
<feature type="chain" id="PRO_0000280764" description="Jhy protein homolog">
    <location>
        <begin position="1"/>
        <end position="778"/>
    </location>
</feature>
<feature type="region of interest" description="Disordered" evidence="2">
    <location>
        <begin position="62"/>
        <end position="271"/>
    </location>
</feature>
<feature type="region of interest" description="Disordered" evidence="2">
    <location>
        <begin position="334"/>
        <end position="408"/>
    </location>
</feature>
<feature type="region of interest" description="Disordered" evidence="2">
    <location>
        <begin position="631"/>
        <end position="654"/>
    </location>
</feature>
<feature type="region of interest" description="Disordered" evidence="2">
    <location>
        <begin position="721"/>
        <end position="746"/>
    </location>
</feature>
<feature type="compositionally biased region" description="Basic and acidic residues" evidence="2">
    <location>
        <begin position="118"/>
        <end position="139"/>
    </location>
</feature>
<feature type="compositionally biased region" description="Low complexity" evidence="2">
    <location>
        <begin position="223"/>
        <end position="234"/>
    </location>
</feature>
<feature type="compositionally biased region" description="Polar residues" evidence="2">
    <location>
        <begin position="334"/>
        <end position="344"/>
    </location>
</feature>
<feature type="compositionally biased region" description="Basic residues" evidence="2">
    <location>
        <begin position="358"/>
        <end position="371"/>
    </location>
</feature>
<feature type="compositionally biased region" description="Polar residues" evidence="2">
    <location>
        <begin position="375"/>
        <end position="389"/>
    </location>
</feature>
<feature type="compositionally biased region" description="Low complexity" evidence="2">
    <location>
        <begin position="390"/>
        <end position="402"/>
    </location>
</feature>
<feature type="compositionally biased region" description="Basic residues" evidence="2">
    <location>
        <begin position="633"/>
        <end position="650"/>
    </location>
</feature>
<feature type="compositionally biased region" description="Basic and acidic residues" evidence="2">
    <location>
        <begin position="733"/>
        <end position="746"/>
    </location>
</feature>
<feature type="splice variant" id="VSP_023915" description="In isoform 2." evidence="3">
    <original>ISYPVRVTDKTSIQNAKEM</original>
    <variation>VILRVNSLPRDGFKTFWSQ</variation>
    <location>
        <begin position="289"/>
        <end position="307"/>
    </location>
</feature>
<feature type="splice variant" id="VSP_023916" description="In isoform 2." evidence="3">
    <location>
        <begin position="308"/>
        <end position="778"/>
    </location>
</feature>
<feature type="sequence variant" id="VAR_050863" description="In dbSNP:rs33999612.">
    <original>H</original>
    <variation>R</variation>
    <location>
        <position position="486"/>
    </location>
</feature>
<feature type="sequence conflict" description="In Ref. 1; BAB15691." evidence="4" ref="1">
    <original>V</original>
    <variation>A</variation>
    <location>
        <position position="295"/>
    </location>
</feature>